<protein>
    <recommendedName>
        <fullName evidence="1">Proline--tRNA ligase</fullName>
        <ecNumber evidence="1">6.1.1.15</ecNumber>
    </recommendedName>
    <alternativeName>
        <fullName evidence="1">Prolyl-tRNA synthetase</fullName>
        <shortName evidence="1">ProRS</shortName>
    </alternativeName>
</protein>
<evidence type="ECO:0000255" key="1">
    <source>
        <dbReference type="HAMAP-Rule" id="MF_01570"/>
    </source>
</evidence>
<proteinExistence type="inferred from homology"/>
<gene>
    <name evidence="1" type="primary">proS</name>
    <name type="ordered locus">CC_1931</name>
</gene>
<dbReference type="EC" id="6.1.1.15" evidence="1"/>
<dbReference type="EMBL" id="AE005673">
    <property type="protein sequence ID" value="AAK23906.1"/>
    <property type="molecule type" value="Genomic_DNA"/>
</dbReference>
<dbReference type="PIR" id="F87488">
    <property type="entry name" value="F87488"/>
</dbReference>
<dbReference type="RefSeq" id="NP_420738.1">
    <property type="nucleotide sequence ID" value="NC_002696.2"/>
</dbReference>
<dbReference type="RefSeq" id="WP_010919797.1">
    <property type="nucleotide sequence ID" value="NC_002696.2"/>
</dbReference>
<dbReference type="SMR" id="Q9A6Z5"/>
<dbReference type="STRING" id="190650.CC_1931"/>
<dbReference type="EnsemblBacteria" id="AAK23906">
    <property type="protein sequence ID" value="AAK23906"/>
    <property type="gene ID" value="CC_1931"/>
</dbReference>
<dbReference type="KEGG" id="ccr:CC_1931"/>
<dbReference type="PATRIC" id="fig|190650.5.peg.1948"/>
<dbReference type="eggNOG" id="COG0442">
    <property type="taxonomic scope" value="Bacteria"/>
</dbReference>
<dbReference type="HOGENOM" id="CLU_016739_4_2_5"/>
<dbReference type="BioCyc" id="CAULO:CC1931-MONOMER"/>
<dbReference type="Proteomes" id="UP000001816">
    <property type="component" value="Chromosome"/>
</dbReference>
<dbReference type="GO" id="GO:0005829">
    <property type="term" value="C:cytosol"/>
    <property type="evidence" value="ECO:0007669"/>
    <property type="project" value="TreeGrafter"/>
</dbReference>
<dbReference type="GO" id="GO:0005524">
    <property type="term" value="F:ATP binding"/>
    <property type="evidence" value="ECO:0007669"/>
    <property type="project" value="UniProtKB-UniRule"/>
</dbReference>
<dbReference type="GO" id="GO:0004827">
    <property type="term" value="F:proline-tRNA ligase activity"/>
    <property type="evidence" value="ECO:0007669"/>
    <property type="project" value="UniProtKB-UniRule"/>
</dbReference>
<dbReference type="GO" id="GO:0006433">
    <property type="term" value="P:prolyl-tRNA aminoacylation"/>
    <property type="evidence" value="ECO:0007669"/>
    <property type="project" value="UniProtKB-UniRule"/>
</dbReference>
<dbReference type="CDD" id="cd00861">
    <property type="entry name" value="ProRS_anticodon_short"/>
    <property type="match status" value="1"/>
</dbReference>
<dbReference type="CDD" id="cd00779">
    <property type="entry name" value="ProRS_core_prok"/>
    <property type="match status" value="1"/>
</dbReference>
<dbReference type="FunFam" id="3.30.930.10:FF:000042">
    <property type="entry name" value="probable proline--tRNA ligase, mitochondrial"/>
    <property type="match status" value="1"/>
</dbReference>
<dbReference type="FunFam" id="3.40.50.800:FF:000032">
    <property type="entry name" value="Proline--tRNA ligase"/>
    <property type="match status" value="1"/>
</dbReference>
<dbReference type="Gene3D" id="3.40.50.800">
    <property type="entry name" value="Anticodon-binding domain"/>
    <property type="match status" value="1"/>
</dbReference>
<dbReference type="Gene3D" id="3.30.930.10">
    <property type="entry name" value="Bira Bifunctional Protein, Domain 2"/>
    <property type="match status" value="1"/>
</dbReference>
<dbReference type="HAMAP" id="MF_01570">
    <property type="entry name" value="Pro_tRNA_synth_type2"/>
    <property type="match status" value="1"/>
</dbReference>
<dbReference type="InterPro" id="IPR002314">
    <property type="entry name" value="aa-tRNA-synt_IIb"/>
</dbReference>
<dbReference type="InterPro" id="IPR006195">
    <property type="entry name" value="aa-tRNA-synth_II"/>
</dbReference>
<dbReference type="InterPro" id="IPR045864">
    <property type="entry name" value="aa-tRNA-synth_II/BPL/LPL"/>
</dbReference>
<dbReference type="InterPro" id="IPR004154">
    <property type="entry name" value="Anticodon-bd"/>
</dbReference>
<dbReference type="InterPro" id="IPR036621">
    <property type="entry name" value="Anticodon-bd_dom_sf"/>
</dbReference>
<dbReference type="InterPro" id="IPR002316">
    <property type="entry name" value="Pro-tRNA-ligase_IIa"/>
</dbReference>
<dbReference type="InterPro" id="IPR004500">
    <property type="entry name" value="Pro-tRNA-synth_IIa_bac-type"/>
</dbReference>
<dbReference type="InterPro" id="IPR050062">
    <property type="entry name" value="Pro-tRNA_synthetase"/>
</dbReference>
<dbReference type="InterPro" id="IPR023716">
    <property type="entry name" value="Prolyl-tRNA_ligase_IIa_type2"/>
</dbReference>
<dbReference type="InterPro" id="IPR044140">
    <property type="entry name" value="ProRS_anticodon_short"/>
</dbReference>
<dbReference type="InterPro" id="IPR033730">
    <property type="entry name" value="ProRS_core_prok"/>
</dbReference>
<dbReference type="NCBIfam" id="NF008979">
    <property type="entry name" value="PRK12325.1"/>
    <property type="match status" value="1"/>
</dbReference>
<dbReference type="NCBIfam" id="TIGR00409">
    <property type="entry name" value="proS_fam_II"/>
    <property type="match status" value="1"/>
</dbReference>
<dbReference type="PANTHER" id="PTHR42753">
    <property type="entry name" value="MITOCHONDRIAL RIBOSOME PROTEIN L39/PROLYL-TRNA LIGASE FAMILY MEMBER"/>
    <property type="match status" value="1"/>
</dbReference>
<dbReference type="PANTHER" id="PTHR42753:SF2">
    <property type="entry name" value="PROLINE--TRNA LIGASE"/>
    <property type="match status" value="1"/>
</dbReference>
<dbReference type="Pfam" id="PF03129">
    <property type="entry name" value="HGTP_anticodon"/>
    <property type="match status" value="1"/>
</dbReference>
<dbReference type="Pfam" id="PF00587">
    <property type="entry name" value="tRNA-synt_2b"/>
    <property type="match status" value="1"/>
</dbReference>
<dbReference type="PRINTS" id="PR01046">
    <property type="entry name" value="TRNASYNTHPRO"/>
</dbReference>
<dbReference type="SUPFAM" id="SSF52954">
    <property type="entry name" value="Class II aaRS ABD-related"/>
    <property type="match status" value="1"/>
</dbReference>
<dbReference type="SUPFAM" id="SSF55681">
    <property type="entry name" value="Class II aaRS and biotin synthetases"/>
    <property type="match status" value="1"/>
</dbReference>
<dbReference type="PROSITE" id="PS50862">
    <property type="entry name" value="AA_TRNA_LIGASE_II"/>
    <property type="match status" value="1"/>
</dbReference>
<organism>
    <name type="scientific">Caulobacter vibrioides (strain ATCC 19089 / CIP 103742 / CB 15)</name>
    <name type="common">Caulobacter crescentus</name>
    <dbReference type="NCBI Taxonomy" id="190650"/>
    <lineage>
        <taxon>Bacteria</taxon>
        <taxon>Pseudomonadati</taxon>
        <taxon>Pseudomonadota</taxon>
        <taxon>Alphaproteobacteria</taxon>
        <taxon>Caulobacterales</taxon>
        <taxon>Caulobacteraceae</taxon>
        <taxon>Caulobacter</taxon>
    </lineage>
</organism>
<keyword id="KW-0030">Aminoacyl-tRNA synthetase</keyword>
<keyword id="KW-0067">ATP-binding</keyword>
<keyword id="KW-0963">Cytoplasm</keyword>
<keyword id="KW-0436">Ligase</keyword>
<keyword id="KW-0547">Nucleotide-binding</keyword>
<keyword id="KW-0648">Protein biosynthesis</keyword>
<keyword id="KW-1185">Reference proteome</keyword>
<accession>Q9A6Z5</accession>
<comment type="function">
    <text evidence="1">Catalyzes the attachment of proline to tRNA(Pro) in a two-step reaction: proline is first activated by ATP to form Pro-AMP and then transferred to the acceptor end of tRNA(Pro).</text>
</comment>
<comment type="catalytic activity">
    <reaction evidence="1">
        <text>tRNA(Pro) + L-proline + ATP = L-prolyl-tRNA(Pro) + AMP + diphosphate</text>
        <dbReference type="Rhea" id="RHEA:14305"/>
        <dbReference type="Rhea" id="RHEA-COMP:9700"/>
        <dbReference type="Rhea" id="RHEA-COMP:9702"/>
        <dbReference type="ChEBI" id="CHEBI:30616"/>
        <dbReference type="ChEBI" id="CHEBI:33019"/>
        <dbReference type="ChEBI" id="CHEBI:60039"/>
        <dbReference type="ChEBI" id="CHEBI:78442"/>
        <dbReference type="ChEBI" id="CHEBI:78532"/>
        <dbReference type="ChEBI" id="CHEBI:456215"/>
        <dbReference type="EC" id="6.1.1.15"/>
    </reaction>
</comment>
<comment type="subunit">
    <text evidence="1">Homodimer.</text>
</comment>
<comment type="subcellular location">
    <subcellularLocation>
        <location evidence="1">Cytoplasm</location>
    </subcellularLocation>
</comment>
<comment type="similarity">
    <text evidence="1">Belongs to the class-II aminoacyl-tRNA synthetase family. ProS type 2 subfamily.</text>
</comment>
<sequence>MRSSRYFLPVLKEAPSDAQIVSHQLMLRAGMIRQEAAGIYAWLPLGLRVLNKIEQIVREEMDRAGAIELLMPTIQLADLWRESGRYDDYGDEMLRITDRHKRELLFGPTAEEVVTDIFRASIKSYKDLPKNLYNIQWKFRDERRPRFGVMRGREFLMKDAYSFDLDADGARKSYNRMFVAYLNLFARMGLKAVPMRADTGPIGGDLSHEFIVLAETGESAVFCHKDLVEMPAPGPDLDWINGDLQPLVNQRTALYAATEEMHDEAAFNALPEGDRLSARGIEVGHIFSFGTKYSEPMKATVQGPDGQQVPVQMGSYGVGVSRLLGAIIEASHDEGGIIWPESVAPFDVGIVNMRQGDAACDAACETAYNALKAAGREVLYDDTDARGGAKFATMDLIGLPWQLIVGPKGIAEGVVEIKHRKTGERHTASLESVLDGLTKSKTT</sequence>
<feature type="chain" id="PRO_0000248896" description="Proline--tRNA ligase">
    <location>
        <begin position="1"/>
        <end position="443"/>
    </location>
</feature>
<reference key="1">
    <citation type="journal article" date="2001" name="Proc. Natl. Acad. Sci. U.S.A.">
        <title>Complete genome sequence of Caulobacter crescentus.</title>
        <authorList>
            <person name="Nierman W.C."/>
            <person name="Feldblyum T.V."/>
            <person name="Laub M.T."/>
            <person name="Paulsen I.T."/>
            <person name="Nelson K.E."/>
            <person name="Eisen J.A."/>
            <person name="Heidelberg J.F."/>
            <person name="Alley M.R.K."/>
            <person name="Ohta N."/>
            <person name="Maddock J.R."/>
            <person name="Potocka I."/>
            <person name="Nelson W.C."/>
            <person name="Newton A."/>
            <person name="Stephens C."/>
            <person name="Phadke N.D."/>
            <person name="Ely B."/>
            <person name="DeBoy R.T."/>
            <person name="Dodson R.J."/>
            <person name="Durkin A.S."/>
            <person name="Gwinn M.L."/>
            <person name="Haft D.H."/>
            <person name="Kolonay J.F."/>
            <person name="Smit J."/>
            <person name="Craven M.B."/>
            <person name="Khouri H.M."/>
            <person name="Shetty J."/>
            <person name="Berry K.J."/>
            <person name="Utterback T.R."/>
            <person name="Tran K."/>
            <person name="Wolf A.M."/>
            <person name="Vamathevan J.J."/>
            <person name="Ermolaeva M.D."/>
            <person name="White O."/>
            <person name="Salzberg S.L."/>
            <person name="Venter J.C."/>
            <person name="Shapiro L."/>
            <person name="Fraser C.M."/>
        </authorList>
    </citation>
    <scope>NUCLEOTIDE SEQUENCE [LARGE SCALE GENOMIC DNA]</scope>
    <source>
        <strain>ATCC 19089 / CIP 103742 / CB 15</strain>
    </source>
</reference>
<name>SYP_CAUVC</name>